<feature type="initiator methionine" description="Removed" evidence="1">
    <location>
        <position position="1"/>
    </location>
</feature>
<feature type="chain" id="PRO_0000270588" description="Histone H3">
    <location>
        <begin position="2"/>
        <end position="136"/>
    </location>
</feature>
<feature type="region of interest" description="Disordered" evidence="2">
    <location>
        <begin position="1"/>
        <end position="43"/>
    </location>
</feature>
<feature type="modified residue" description="N6,N6,N6-trimethyllysine; alternate" evidence="1">
    <location>
        <position position="5"/>
    </location>
</feature>
<feature type="modified residue" description="N6,N6-dimethyllysine; alternate" evidence="1">
    <location>
        <position position="5"/>
    </location>
</feature>
<feature type="modified residue" description="N6-methyllysine; alternate" evidence="1">
    <location>
        <position position="5"/>
    </location>
</feature>
<feature type="modified residue" description="N6-acetyllysine; alternate" evidence="1">
    <location>
        <position position="10"/>
    </location>
</feature>
<feature type="modified residue" description="N6-methyllysine; alternate" evidence="1">
    <location>
        <position position="10"/>
    </location>
</feature>
<feature type="modified residue" description="Phosphoserine" evidence="1">
    <location>
        <position position="11"/>
    </location>
</feature>
<feature type="modified residue" description="N6,N6-dimethyllysine; alternate" evidence="1">
    <location>
        <position position="15"/>
    </location>
</feature>
<feature type="modified residue" description="N6-acetyllysine; alternate" evidence="1">
    <location>
        <position position="15"/>
    </location>
</feature>
<feature type="modified residue" description="N6-methylated lysine; alternate" evidence="1">
    <location>
        <position position="15"/>
    </location>
</feature>
<feature type="modified residue" description="N6-acetyllysine; alternate" evidence="1">
    <location>
        <position position="19"/>
    </location>
</feature>
<feature type="modified residue" description="N6-methyllysine; alternate" evidence="1">
    <location>
        <position position="19"/>
    </location>
</feature>
<feature type="modified residue" description="N6-acetyllysine; alternate" evidence="1">
    <location>
        <position position="24"/>
    </location>
</feature>
<feature type="modified residue" description="N6-methyllysine; alternate" evidence="1">
    <location>
        <position position="24"/>
    </location>
</feature>
<feature type="modified residue" description="N6,N6,N6-trimethyllysine; alternate" evidence="1">
    <location>
        <position position="28"/>
    </location>
</feature>
<feature type="modified residue" description="N6,N6-dimethyllysine; alternate" evidence="1">
    <location>
        <position position="28"/>
    </location>
</feature>
<feature type="modified residue" description="N6-acetyllysine; alternate" evidence="1">
    <location>
        <position position="28"/>
    </location>
</feature>
<feature type="modified residue" description="N6-methyllysine; alternate" evidence="1">
    <location>
        <position position="28"/>
    </location>
</feature>
<feature type="modified residue" description="N6,N6,N6-trimethyllysine; alternate" evidence="1">
    <location>
        <position position="37"/>
    </location>
</feature>
<feature type="modified residue" description="N6,N6-dimethyllysine; alternate" evidence="1">
    <location>
        <position position="37"/>
    </location>
</feature>
<feature type="modified residue" description="N6-acetyllysine; alternate" evidence="1">
    <location>
        <position position="37"/>
    </location>
</feature>
<feature type="modified residue" description="N6-methyllysine; alternate" evidence="1">
    <location>
        <position position="37"/>
    </location>
</feature>
<feature type="modified residue" description="N6-acetyllysine" evidence="1">
    <location>
        <position position="57"/>
    </location>
</feature>
<feature type="modified residue" description="N6-acetyllysine" evidence="1">
    <location>
        <position position="65"/>
    </location>
</feature>
<feature type="modified residue" description="N6,N6,N6-trimethyllysine; alternate" evidence="1">
    <location>
        <position position="80"/>
    </location>
</feature>
<feature type="modified residue" description="N6,N6-dimethyllysine; alternate" evidence="1">
    <location>
        <position position="80"/>
    </location>
</feature>
<feature type="modified residue" description="N6-methyllysine; alternate" evidence="1">
    <location>
        <position position="80"/>
    </location>
</feature>
<protein>
    <recommendedName>
        <fullName>Histone H3</fullName>
    </recommendedName>
</protein>
<keyword id="KW-0007">Acetylation</keyword>
<keyword id="KW-0158">Chromosome</keyword>
<keyword id="KW-0238">DNA-binding</keyword>
<keyword id="KW-0488">Methylation</keyword>
<keyword id="KW-0544">Nucleosome core</keyword>
<keyword id="KW-0539">Nucleus</keyword>
<keyword id="KW-0597">Phosphoprotein</keyword>
<keyword id="KW-1185">Reference proteome</keyword>
<organism>
    <name type="scientific">Chaetomium globosum (strain ATCC 6205 / CBS 148.51 / DSM 1962 / NBRC 6347 / NRRL 1970)</name>
    <name type="common">Soil fungus</name>
    <dbReference type="NCBI Taxonomy" id="306901"/>
    <lineage>
        <taxon>Eukaryota</taxon>
        <taxon>Fungi</taxon>
        <taxon>Dikarya</taxon>
        <taxon>Ascomycota</taxon>
        <taxon>Pezizomycotina</taxon>
        <taxon>Sordariomycetes</taxon>
        <taxon>Sordariomycetidae</taxon>
        <taxon>Sordariales</taxon>
        <taxon>Chaetomiaceae</taxon>
        <taxon>Chaetomium</taxon>
    </lineage>
</organism>
<gene>
    <name type="primary">HHT1</name>
    <name type="ORF">CHGG_10296</name>
</gene>
<accession>Q6DL03</accession>
<accession>Q2GP08</accession>
<dbReference type="EMBL" id="AY669068">
    <property type="protein sequence ID" value="AAT74576.1"/>
    <property type="molecule type" value="mRNA"/>
</dbReference>
<dbReference type="EMBL" id="CH408035">
    <property type="protein sequence ID" value="EAQ83892.1"/>
    <property type="molecule type" value="Genomic_DNA"/>
</dbReference>
<dbReference type="RefSeq" id="XP_001228223.1">
    <property type="nucleotide sequence ID" value="XM_001228222.1"/>
</dbReference>
<dbReference type="SMR" id="Q6DL03"/>
<dbReference type="FunCoup" id="Q6DL03">
    <property type="interactions" value="745"/>
</dbReference>
<dbReference type="STRING" id="306901.Q6DL03"/>
<dbReference type="GeneID" id="4396600"/>
<dbReference type="VEuPathDB" id="FungiDB:CHGG_10296"/>
<dbReference type="eggNOG" id="KOG1745">
    <property type="taxonomic scope" value="Eukaryota"/>
</dbReference>
<dbReference type="HOGENOM" id="CLU_078295_4_0_1"/>
<dbReference type="InParanoid" id="Q6DL03"/>
<dbReference type="OMA" id="HIFAEMA"/>
<dbReference type="OrthoDB" id="842664at2759"/>
<dbReference type="Proteomes" id="UP000001056">
    <property type="component" value="Unassembled WGS sequence"/>
</dbReference>
<dbReference type="GO" id="GO:0000786">
    <property type="term" value="C:nucleosome"/>
    <property type="evidence" value="ECO:0007669"/>
    <property type="project" value="UniProtKB-KW"/>
</dbReference>
<dbReference type="GO" id="GO:0005634">
    <property type="term" value="C:nucleus"/>
    <property type="evidence" value="ECO:0007669"/>
    <property type="project" value="UniProtKB-SubCell"/>
</dbReference>
<dbReference type="GO" id="GO:0003677">
    <property type="term" value="F:DNA binding"/>
    <property type="evidence" value="ECO:0007669"/>
    <property type="project" value="UniProtKB-KW"/>
</dbReference>
<dbReference type="GO" id="GO:0046982">
    <property type="term" value="F:protein heterodimerization activity"/>
    <property type="evidence" value="ECO:0007669"/>
    <property type="project" value="InterPro"/>
</dbReference>
<dbReference type="GO" id="GO:0030527">
    <property type="term" value="F:structural constituent of chromatin"/>
    <property type="evidence" value="ECO:0007669"/>
    <property type="project" value="InterPro"/>
</dbReference>
<dbReference type="CDD" id="cd22911">
    <property type="entry name" value="HFD_H3"/>
    <property type="match status" value="1"/>
</dbReference>
<dbReference type="FunFam" id="1.10.20.10:FF:000010">
    <property type="entry name" value="Histone H3"/>
    <property type="match status" value="1"/>
</dbReference>
<dbReference type="Gene3D" id="1.10.20.10">
    <property type="entry name" value="Histone, subunit A"/>
    <property type="match status" value="1"/>
</dbReference>
<dbReference type="InterPro" id="IPR009072">
    <property type="entry name" value="Histone-fold"/>
</dbReference>
<dbReference type="InterPro" id="IPR007125">
    <property type="entry name" value="Histone_H2A/H2B/H3"/>
</dbReference>
<dbReference type="InterPro" id="IPR000164">
    <property type="entry name" value="Histone_H3/CENP-A"/>
</dbReference>
<dbReference type="PANTHER" id="PTHR11426">
    <property type="entry name" value="HISTONE H3"/>
    <property type="match status" value="1"/>
</dbReference>
<dbReference type="Pfam" id="PF00125">
    <property type="entry name" value="Histone"/>
    <property type="match status" value="1"/>
</dbReference>
<dbReference type="PRINTS" id="PR00622">
    <property type="entry name" value="HISTONEH3"/>
</dbReference>
<dbReference type="SMART" id="SM00428">
    <property type="entry name" value="H3"/>
    <property type="match status" value="1"/>
</dbReference>
<dbReference type="SUPFAM" id="SSF47113">
    <property type="entry name" value="Histone-fold"/>
    <property type="match status" value="1"/>
</dbReference>
<dbReference type="PROSITE" id="PS00322">
    <property type="entry name" value="HISTONE_H3_1"/>
    <property type="match status" value="1"/>
</dbReference>
<dbReference type="PROSITE" id="PS00959">
    <property type="entry name" value="HISTONE_H3_2"/>
    <property type="match status" value="1"/>
</dbReference>
<reference key="1">
    <citation type="submission" date="2004-06" db="EMBL/GenBank/DDBJ databases">
        <authorList>
            <person name="Yang Q."/>
            <person name="Liu Z."/>
            <person name="Song J."/>
        </authorList>
    </citation>
    <scope>NUCLEOTIDE SEQUENCE [MRNA]</scope>
</reference>
<reference key="2">
    <citation type="journal article" date="2015" name="Genome Announc.">
        <title>Draft genome sequence of the cellulolytic fungus Chaetomium globosum.</title>
        <authorList>
            <person name="Cuomo C.A."/>
            <person name="Untereiner W.A."/>
            <person name="Ma L.-J."/>
            <person name="Grabherr M."/>
            <person name="Birren B.W."/>
        </authorList>
    </citation>
    <scope>NUCLEOTIDE SEQUENCE [LARGE SCALE GENOMIC DNA]</scope>
    <source>
        <strain>ATCC 6205 / CBS 148.51 / DSM 1962 / NBRC 6347 / NRRL 1970</strain>
    </source>
</reference>
<proteinExistence type="evidence at transcript level"/>
<evidence type="ECO:0000250" key="1"/>
<evidence type="ECO:0000256" key="2">
    <source>
        <dbReference type="SAM" id="MobiDB-lite"/>
    </source>
</evidence>
<evidence type="ECO:0000305" key="3"/>
<name>H3_CHAGB</name>
<sequence>MARTKQTARKSTGGKAPRKQLASKAARKSAPSTGGVKKPHRYKPGTVALREIRRYQKSTELLIRKLPFQRLVREIAQDFKSDLRFQSSAIGALQESVESYLVSLFEDTNLCAIHAKRVTIQSKDIQLARRLRGERN</sequence>
<comment type="function">
    <text>Core component of nucleosome. Nucleosomes wrap and compact DNA into chromatin, limiting DNA accessibility to the cellular machineries which require DNA as a template. Histones thereby play a central role in transcription regulation, DNA repair, DNA replication and chromosomal stability. DNA accessibility is regulated via a complex set of post-translational modifications of histones, also called histone code, and nucleosome remodeling.</text>
</comment>
<comment type="subunit">
    <text>The nucleosome is a histone octamer containing two molecules each of H2A, H2B, H3 and H4 assembled in one H3-H4 heterotetramer and two H2A-H2B heterodimers. The octamer wraps approximately 147 bp of DNA.</text>
</comment>
<comment type="subcellular location">
    <subcellularLocation>
        <location>Nucleus</location>
    </subcellularLocation>
    <subcellularLocation>
        <location>Chromosome</location>
    </subcellularLocation>
</comment>
<comment type="PTM">
    <text evidence="1">Phosphorylated to form H3S10ph. H3S10ph promotes subsequent H3K14ac formation and is required for transcriptional activation through TBP recruitment to the promoters (By similarity).</text>
</comment>
<comment type="PTM">
    <text evidence="1">Mono-, di- and trimethylated by the COMPASS complex to form H3K4me1/2/3. H3K4me activates gene expression by regulating transcription elongation and plays a role in telomere length maintenance. H3K4me enrichment correlates with transcription levels, and occurs in a 5' to 3' gradient with H3K4me3 enrichment at the 5'-end of genes, shifting to H3K4me2 and then H3K4me1. Methylated by SET2 to form H3K36me. H3K36me represses gene expression. Methylated by DOT1 to form H3K79me. H3K79me is required for association of SIR proteins with telomeric regions and for telomeric silencing. The COMPASS-mediated formation of H3K4me2/3 and the DOT1-mediated formation of H3K79me require H2BK123ub1 (By similarity).</text>
</comment>
<comment type="PTM">
    <text evidence="1">Acetylation of histone H3 leads to transcriptional activation. H3K14ac formation by GCN5 is promoted by H3S10ph. H3K14ac can also be formed by ESA1. H3K56ac formation occurs predominantly in newly synthesized H3 molecules during G1, S and G2/M of the cell cycle and may be involved in DNA repair (By similarity).</text>
</comment>
<comment type="similarity">
    <text evidence="3">Belongs to the histone H3 family.</text>
</comment>
<comment type="caution">
    <text evidence="3">To ensure consistency between histone entries, we follow the 'Brno' nomenclature for histone modifications, with positions referring to those used in the literature for the 'closest' model organism. Due to slight variations in histone sequences between organisms and to the presence of initiator methionine in UniProtKB/Swiss-Prot sequences, the actual positions of modified amino acids in the sequence generally differ. In this entry the following conventions are used: H3K4me1/2/3 = mono-, di- and trimethylated Lys-5; H3K9ac = acetylated Lys-10; H3K9me1 = monomethylated Lys-10; H3S10ph = phosphorylated Ser-11; H3K14ac = acetylated Lys-15; H3K14me2 = dimethylated Lys-15; H3K18ac = acetylated Lys-19; H3K18me1 = monomethylated Lys-19; H3K23ac = acetylated Lys-24; H3K23me1 = monomethylated Lys-24; H3K27ac = acetylated Lys-28; H3K27me1/2/3 = mono-, di- and trimethylated Lys-28; H3K36ac = acetylated Lys-37; H3K36me1/2/3 = mono-, di- and trimethylated Lys-37; H3K56ac = acetylated Lys-57; H3K64ac = acetylated Lys-65; H3K79me1/2/3 = mono-, di- and trimethylated Lys-80.</text>
</comment>